<name>RS6_HELPH</name>
<feature type="chain" id="PRO_1000005275" description="Small ribosomal subunit protein bS6">
    <location>
        <begin position="1"/>
        <end position="142"/>
    </location>
</feature>
<feature type="region of interest" description="Disordered" evidence="2">
    <location>
        <begin position="110"/>
        <end position="142"/>
    </location>
</feature>
<feature type="compositionally biased region" description="Basic and acidic residues" evidence="2">
    <location>
        <begin position="110"/>
        <end position="133"/>
    </location>
</feature>
<comment type="function">
    <text evidence="1">Binds together with bS18 to 16S ribosomal RNA.</text>
</comment>
<comment type="similarity">
    <text evidence="1">Belongs to the bacterial ribosomal protein bS6 family.</text>
</comment>
<keyword id="KW-0687">Ribonucleoprotein</keyword>
<keyword id="KW-0689">Ribosomal protein</keyword>
<keyword id="KW-0694">RNA-binding</keyword>
<keyword id="KW-0699">rRNA-binding</keyword>
<protein>
    <recommendedName>
        <fullName evidence="1">Small ribosomal subunit protein bS6</fullName>
    </recommendedName>
    <alternativeName>
        <fullName evidence="3">30S ribosomal protein S6</fullName>
    </alternativeName>
</protein>
<accession>Q1CS16</accession>
<proteinExistence type="inferred from homology"/>
<reference key="1">
    <citation type="journal article" date="2006" name="Proc. Natl. Acad. Sci. U.S.A.">
        <title>The complete genome sequence of a chronic atrophic gastritis Helicobacter pylori strain: evolution during disease progression.</title>
        <authorList>
            <person name="Oh J.D."/>
            <person name="Kling-Baeckhed H."/>
            <person name="Giannakis M."/>
            <person name="Xu J."/>
            <person name="Fulton R.S."/>
            <person name="Fulton L.A."/>
            <person name="Cordum H.S."/>
            <person name="Wang C."/>
            <person name="Elliott G."/>
            <person name="Edwards J."/>
            <person name="Mardis E.R."/>
            <person name="Engstrand L.G."/>
            <person name="Gordon J.I."/>
        </authorList>
    </citation>
    <scope>NUCLEOTIDE SEQUENCE [LARGE SCALE GENOMIC DNA]</scope>
    <source>
        <strain>HPAG1</strain>
    </source>
</reference>
<gene>
    <name evidence="1" type="primary">rpsF</name>
    <name type="ordered locus">HPAG1_1189</name>
</gene>
<organism>
    <name type="scientific">Helicobacter pylori (strain HPAG1)</name>
    <dbReference type="NCBI Taxonomy" id="357544"/>
    <lineage>
        <taxon>Bacteria</taxon>
        <taxon>Pseudomonadati</taxon>
        <taxon>Campylobacterota</taxon>
        <taxon>Epsilonproteobacteria</taxon>
        <taxon>Campylobacterales</taxon>
        <taxon>Helicobacteraceae</taxon>
        <taxon>Helicobacter</taxon>
    </lineage>
</organism>
<evidence type="ECO:0000255" key="1">
    <source>
        <dbReference type="HAMAP-Rule" id="MF_00360"/>
    </source>
</evidence>
<evidence type="ECO:0000256" key="2">
    <source>
        <dbReference type="SAM" id="MobiDB-lite"/>
    </source>
</evidence>
<evidence type="ECO:0000305" key="3"/>
<dbReference type="EMBL" id="CP000241">
    <property type="protein sequence ID" value="ABF85256.1"/>
    <property type="molecule type" value="Genomic_DNA"/>
</dbReference>
<dbReference type="RefSeq" id="WP_001216697.1">
    <property type="nucleotide sequence ID" value="NC_008086.1"/>
</dbReference>
<dbReference type="SMR" id="Q1CS16"/>
<dbReference type="KEGG" id="hpa:HPAG1_1189"/>
<dbReference type="HOGENOM" id="CLU_113441_4_1_7"/>
<dbReference type="GO" id="GO:0022627">
    <property type="term" value="C:cytosolic small ribosomal subunit"/>
    <property type="evidence" value="ECO:0007669"/>
    <property type="project" value="TreeGrafter"/>
</dbReference>
<dbReference type="GO" id="GO:0070181">
    <property type="term" value="F:small ribosomal subunit rRNA binding"/>
    <property type="evidence" value="ECO:0007669"/>
    <property type="project" value="TreeGrafter"/>
</dbReference>
<dbReference type="GO" id="GO:0003735">
    <property type="term" value="F:structural constituent of ribosome"/>
    <property type="evidence" value="ECO:0007669"/>
    <property type="project" value="InterPro"/>
</dbReference>
<dbReference type="GO" id="GO:0006412">
    <property type="term" value="P:translation"/>
    <property type="evidence" value="ECO:0007669"/>
    <property type="project" value="UniProtKB-UniRule"/>
</dbReference>
<dbReference type="CDD" id="cd00473">
    <property type="entry name" value="bS6"/>
    <property type="match status" value="1"/>
</dbReference>
<dbReference type="FunFam" id="3.30.70.60:FF:000010">
    <property type="entry name" value="30S ribosomal protein S6"/>
    <property type="match status" value="1"/>
</dbReference>
<dbReference type="Gene3D" id="3.30.70.60">
    <property type="match status" value="1"/>
</dbReference>
<dbReference type="HAMAP" id="MF_00360">
    <property type="entry name" value="Ribosomal_bS6"/>
    <property type="match status" value="1"/>
</dbReference>
<dbReference type="InterPro" id="IPR000529">
    <property type="entry name" value="Ribosomal_bS6"/>
</dbReference>
<dbReference type="InterPro" id="IPR020815">
    <property type="entry name" value="Ribosomal_bS6_CS"/>
</dbReference>
<dbReference type="InterPro" id="IPR035980">
    <property type="entry name" value="Ribosomal_bS6_sf"/>
</dbReference>
<dbReference type="InterPro" id="IPR020814">
    <property type="entry name" value="Ribosomal_S6_plastid/chlpt"/>
</dbReference>
<dbReference type="InterPro" id="IPR014717">
    <property type="entry name" value="Transl_elong_EF1B/ribsomal_bS6"/>
</dbReference>
<dbReference type="NCBIfam" id="TIGR00166">
    <property type="entry name" value="S6"/>
    <property type="match status" value="1"/>
</dbReference>
<dbReference type="PANTHER" id="PTHR21011">
    <property type="entry name" value="MITOCHONDRIAL 28S RIBOSOMAL PROTEIN S6"/>
    <property type="match status" value="1"/>
</dbReference>
<dbReference type="PANTHER" id="PTHR21011:SF1">
    <property type="entry name" value="SMALL RIBOSOMAL SUBUNIT PROTEIN BS6M"/>
    <property type="match status" value="1"/>
</dbReference>
<dbReference type="Pfam" id="PF01250">
    <property type="entry name" value="Ribosomal_S6"/>
    <property type="match status" value="1"/>
</dbReference>
<dbReference type="SUPFAM" id="SSF54995">
    <property type="entry name" value="Ribosomal protein S6"/>
    <property type="match status" value="1"/>
</dbReference>
<dbReference type="PROSITE" id="PS01048">
    <property type="entry name" value="RIBOSOMAL_S6"/>
    <property type="match status" value="1"/>
</dbReference>
<sequence>MRHYETMFILKPTLVEEEIKSKIEFYKEVITKHHGVIETSLDMGMRNLAYEIKKHKRGYYYVAYFKAEPSMILELERLYRINEDVLRFIVIKYESKKEVEAWHALVDRANKKPSHAKEKHEKTEHTHSHHLEEAESVGSHSE</sequence>